<proteinExistence type="evidence at protein level"/>
<feature type="chain" id="PRO_0000240214" description="Nuclear distribution protein nudE-like 1">
    <location>
        <begin position="1"/>
        <end position="345"/>
    </location>
</feature>
<feature type="region of interest" description="Self-association" evidence="1">
    <location>
        <begin position="56"/>
        <end position="166"/>
    </location>
</feature>
<feature type="region of interest" description="Interaction with KATNB1" evidence="1">
    <location>
        <begin position="64"/>
        <end position="189"/>
    </location>
</feature>
<feature type="region of interest" description="Required for interaction with PAFAH1B1" evidence="1">
    <location>
        <begin position="114"/>
        <end position="133"/>
    </location>
</feature>
<feature type="region of interest" description="Interaction with CENPF" evidence="1">
    <location>
        <begin position="175"/>
        <end position="345"/>
    </location>
</feature>
<feature type="region of interest" description="Interaction with YWHAE" evidence="1">
    <location>
        <begin position="189"/>
        <end position="256"/>
    </location>
</feature>
<feature type="region of interest" description="Interaction with NEFL" evidence="1">
    <location>
        <begin position="191"/>
        <end position="345"/>
    </location>
</feature>
<feature type="region of interest" description="Interaction with KATNA1" evidence="1">
    <location>
        <begin position="195"/>
        <end position="256"/>
    </location>
</feature>
<feature type="region of interest" description="Disordered" evidence="6">
    <location>
        <begin position="217"/>
        <end position="240"/>
    </location>
</feature>
<feature type="region of interest" description="Interaction with DISC1" evidence="1">
    <location>
        <begin position="227"/>
        <end position="278"/>
    </location>
</feature>
<feature type="region of interest" description="Required for localization to the centrosome and interaction with dynein, dynactin, tubulin gamma, PCM1 and PCNT" evidence="1">
    <location>
        <begin position="256"/>
        <end position="291"/>
    </location>
</feature>
<feature type="region of interest" description="Disordered" evidence="6">
    <location>
        <begin position="316"/>
        <end position="345"/>
    </location>
</feature>
<feature type="coiled-coil region" evidence="5">
    <location>
        <begin position="27"/>
        <end position="190"/>
    </location>
</feature>
<feature type="compositionally biased region" description="Low complexity" evidence="6">
    <location>
        <begin position="329"/>
        <end position="339"/>
    </location>
</feature>
<feature type="modified residue" description="Phosphoserine" evidence="4">
    <location>
        <position position="215"/>
    </location>
</feature>
<feature type="modified residue" description="Phosphothreonine; by CDK1 and MAPK1" evidence="4">
    <location>
        <position position="219"/>
    </location>
</feature>
<feature type="modified residue" description="Phosphoserine" evidence="4">
    <location>
        <position position="231"/>
    </location>
</feature>
<feature type="modified residue" description="Phosphoserine; by CDK1" evidence="4">
    <location>
        <position position="242"/>
    </location>
</feature>
<feature type="modified residue" description="Phosphothreonine; by CDK1 and MAPK1" evidence="4">
    <location>
        <position position="245"/>
    </location>
</feature>
<feature type="modified residue" description="Phosphoserine" evidence="2">
    <location>
        <position position="344"/>
    </location>
</feature>
<feature type="lipid moiety-binding region" description="S-palmitoyl cysteine; by ZDHHC2, ZDHHC3 and ZDHHC7" evidence="1">
    <location>
        <position position="273"/>
    </location>
</feature>
<protein>
    <recommendedName>
        <fullName>Nuclear distribution protein nudE-like 1</fullName>
        <shortName>Protein Nudel</shortName>
    </recommendedName>
</protein>
<comment type="function">
    <text evidence="1 2 3 4">Required for organization of the cellular microtubule array and microtubule anchoring at the centrosome. May regulate microtubule organization at least in part by targeting the microtubule severing protein KATNA1 to the centrosome. Also positively regulates the activity of the minus-end directed microtubule motor protein dynein. May enhance dynein-mediated microtubule sliding by targeting dynein to the microtubule plus ends. Required for several dynein- and microtubule-dependent processes such as the maintenance of Golgi integrity, the centripetal motion of secretory vesicles and the coupling of the nucleus and centrosome. Also required during brain development for the migration of newly formed neurons from the ventricular/subventricular zone toward the cortical plate. Plays a role, together with DISC1, in the regulation of neurite outgrowth. Required for mitosis in some cell types but appears to be dispensible for mitosis in cortical neuronal progenitors, which instead requires NDE1. Facilitates the polymerization of neurofilaments from the individual subunits NEFH and NEFL. Positively regulates lysosome peripheral distribution and ruffled border formation in osteoclasts (By similarity). Plays a role, together with DISC1, in the regulation of neurite outgrowth (By similarity). May act as a RAB9A/B effector that tethers RAB9-associated late endosomes to the dynein motor for their retrograde transport to the trans-Golgi network (By similarity).</text>
</comment>
<comment type="subunit">
    <text evidence="1 3 4">Self-associates. Interacts with DISC1, dynein, dynactin, tubulin gamma, KATNA1, KATNB1, microtubules, PAFAH1B1, PCM1, PCNT, and YWHAE. Interacts directly with NEFL and indirectly with NEFH. Interacts (via C-terminus) with CENPF. Interacts with ZNF365. Interacts with PLEKHM1 (via N- and C-terminus). Interacts with GTP-bound RAB9A; the interaction may lead to RAB9A-dynein motor tethering (By similarity).</text>
</comment>
<comment type="subcellular location">
    <subcellularLocation>
        <location evidence="1">Cytoplasm</location>
        <location evidence="1">Cytoskeleton</location>
    </subcellularLocation>
    <subcellularLocation>
        <location evidence="1">Cytoplasm</location>
        <location evidence="1">Cytoskeleton</location>
        <location evidence="1">Microtubule organizing center</location>
        <location evidence="1">Centrosome</location>
    </subcellularLocation>
    <subcellularLocation>
        <location evidence="1">Chromosome</location>
        <location evidence="1">Centromere</location>
        <location evidence="1">Kinetochore</location>
    </subcellularLocation>
    <subcellularLocation>
        <location evidence="1">Cytoplasm</location>
        <location evidence="1">Cytoskeleton</location>
        <location evidence="1">Spindle</location>
    </subcellularLocation>
    <text evidence="1">Localizes to the interphase centrosome and the mitotic spindle. Localizes to the cell body of the motor neurons and colocalizes with assembled neurofilaments within axonal processes. Localizes to the microtubules of the manchette in elongated spermatids. Colocalizes with DISC1 in the perinuclear region, including the centrosome. Localizes to the kinetochore in a CENPF-dependent manner (By similarity).</text>
</comment>
<comment type="tissue specificity">
    <text evidence="7">Expressed at low levels in heart, hypothalamus, liver, lung, spleen and stomach. Expressed at higher levels in testis and brain. Within the brain, expressed in cerebellum, cerebral stem, cortex and striatum.</text>
</comment>
<comment type="PTM">
    <text evidence="1">Phosphorylated in mitosis. Can be phosphorylated by CDK1, CDK5 and MAPK1. Phosphorylation by CDK5 promotes interaction with KATNA1 and YWHAE (By similarity).</text>
</comment>
<comment type="PTM">
    <text evidence="1">Palmitoylation at Cys-273 reduces affinity for dynein.</text>
</comment>
<comment type="similarity">
    <text evidence="8">Belongs to the nudE family.</text>
</comment>
<comment type="caution">
    <text evidence="9">Was originally thought to function as an oligopeptidase (NUDEL-oligopeptidase or endooligopeptidase A) which could regulate peptide levels relevant to brain function.</text>
</comment>
<gene>
    <name type="primary">NDEL1</name>
    <name type="synonym">EOPA</name>
</gene>
<reference key="1">
    <citation type="journal article" date="2000" name="Biochem. Biophys. Res. Commun.">
        <title>Molecular and immunochemical evidences demonstrate that endooligopeptidase A is the predominant cytosolic oligopeptidase of rabbit brain.</title>
        <authorList>
            <person name="Hayashi M.A.F."/>
            <person name="Portaro F.C.V."/>
            <person name="Tambourgi D.V."/>
            <person name="Sucupira M."/>
            <person name="Yamane T."/>
            <person name="Fernandes B.L."/>
            <person name="Ferro E.S."/>
            <person name="Reboucas N.A."/>
            <person name="de Camargo A.C.M."/>
        </authorList>
    </citation>
    <scope>NUCLEOTIDE SEQUENCE [MRNA]</scope>
    <scope>PUTATIVE FUNCTION AS AN OLIGOPEPTIDASE</scope>
    <scope>TISSUE SPECIFICITY</scope>
</reference>
<reference key="2">
    <citation type="journal article" date="2000" name="Biochem. Biophys. Res. Commun.">
        <authorList>
            <person name="Hayashi M.A.F."/>
            <person name="Portaro F.C.V."/>
            <person name="Tambourgi D.V."/>
            <person name="Sucupira M."/>
            <person name="Yamane T."/>
            <person name="Fernandes B.L."/>
            <person name="Ferro E.S."/>
            <person name="Reboucas N.A."/>
            <person name="de Camargo A.C.M."/>
        </authorList>
    </citation>
    <scope>ERRATUM OF PUBMED:10694468</scope>
</reference>
<reference key="3">
    <citation type="submission" date="2001-04" db="EMBL/GenBank/DDBJ databases">
        <authorList>
            <person name="Hayashi M.A.F."/>
            <person name="Reboucas N.A."/>
            <person name="Tambourgi D.V."/>
            <person name="Ferro E.S."/>
            <person name="Fernandes B.L."/>
            <person name="Sucupira M."/>
            <person name="de Camargo A.C.M."/>
        </authorList>
    </citation>
    <scope>SEQUENCE REVISION</scope>
</reference>
<organism>
    <name type="scientific">Oryctolagus cuniculus</name>
    <name type="common">Rabbit</name>
    <dbReference type="NCBI Taxonomy" id="9986"/>
    <lineage>
        <taxon>Eukaryota</taxon>
        <taxon>Metazoa</taxon>
        <taxon>Chordata</taxon>
        <taxon>Craniata</taxon>
        <taxon>Vertebrata</taxon>
        <taxon>Euteleostomi</taxon>
        <taxon>Mammalia</taxon>
        <taxon>Eutheria</taxon>
        <taxon>Euarchontoglires</taxon>
        <taxon>Glires</taxon>
        <taxon>Lagomorpha</taxon>
        <taxon>Leporidae</taxon>
        <taxon>Oryctolagus</taxon>
    </lineage>
</organism>
<dbReference type="EMBL" id="AF015037">
    <property type="protein sequence ID" value="AAB99905.3"/>
    <property type="molecule type" value="mRNA"/>
</dbReference>
<dbReference type="PIR" id="PC7064">
    <property type="entry name" value="PC7064"/>
</dbReference>
<dbReference type="RefSeq" id="NP_001075489.1">
    <property type="nucleotide sequence ID" value="NM_001082020.1"/>
</dbReference>
<dbReference type="SMR" id="O46480"/>
<dbReference type="FunCoup" id="O46480">
    <property type="interactions" value="576"/>
</dbReference>
<dbReference type="STRING" id="9986.ENSOCUP00000035102"/>
<dbReference type="PaxDb" id="9986-ENSOCUP00000014285"/>
<dbReference type="GeneID" id="100008657"/>
<dbReference type="KEGG" id="ocu:100008657"/>
<dbReference type="CTD" id="81565"/>
<dbReference type="eggNOG" id="KOG1853">
    <property type="taxonomic scope" value="Eukaryota"/>
</dbReference>
<dbReference type="InParanoid" id="O46480"/>
<dbReference type="OrthoDB" id="5877028at2759"/>
<dbReference type="Proteomes" id="UP000001811">
    <property type="component" value="Unplaced"/>
</dbReference>
<dbReference type="GO" id="GO:0005813">
    <property type="term" value="C:centrosome"/>
    <property type="evidence" value="ECO:0007669"/>
    <property type="project" value="UniProtKB-SubCell"/>
</dbReference>
<dbReference type="GO" id="GO:0005737">
    <property type="term" value="C:cytoplasm"/>
    <property type="evidence" value="ECO:0007669"/>
    <property type="project" value="UniProtKB-KW"/>
</dbReference>
<dbReference type="GO" id="GO:0005871">
    <property type="term" value="C:kinesin complex"/>
    <property type="evidence" value="ECO:0007669"/>
    <property type="project" value="TreeGrafter"/>
</dbReference>
<dbReference type="GO" id="GO:0000776">
    <property type="term" value="C:kinetochore"/>
    <property type="evidence" value="ECO:0007669"/>
    <property type="project" value="UniProtKB-KW"/>
</dbReference>
<dbReference type="GO" id="GO:0005874">
    <property type="term" value="C:microtubule"/>
    <property type="evidence" value="ECO:0007669"/>
    <property type="project" value="UniProtKB-KW"/>
</dbReference>
<dbReference type="GO" id="GO:0005819">
    <property type="term" value="C:spindle"/>
    <property type="evidence" value="ECO:0007669"/>
    <property type="project" value="UniProtKB-SubCell"/>
</dbReference>
<dbReference type="GO" id="GO:0008017">
    <property type="term" value="F:microtubule binding"/>
    <property type="evidence" value="ECO:0007669"/>
    <property type="project" value="InterPro"/>
</dbReference>
<dbReference type="GO" id="GO:0030154">
    <property type="term" value="P:cell differentiation"/>
    <property type="evidence" value="ECO:0007669"/>
    <property type="project" value="UniProtKB-KW"/>
</dbReference>
<dbReference type="GO" id="GO:0016477">
    <property type="term" value="P:cell migration"/>
    <property type="evidence" value="ECO:0007669"/>
    <property type="project" value="TreeGrafter"/>
</dbReference>
<dbReference type="GO" id="GO:0051642">
    <property type="term" value="P:centrosome localization"/>
    <property type="evidence" value="ECO:0007669"/>
    <property type="project" value="TreeGrafter"/>
</dbReference>
<dbReference type="GO" id="GO:0007059">
    <property type="term" value="P:chromosome segregation"/>
    <property type="evidence" value="ECO:0007669"/>
    <property type="project" value="TreeGrafter"/>
</dbReference>
<dbReference type="GO" id="GO:0051303">
    <property type="term" value="P:establishment of chromosome localization"/>
    <property type="evidence" value="ECO:0007669"/>
    <property type="project" value="TreeGrafter"/>
</dbReference>
<dbReference type="GO" id="GO:0000132">
    <property type="term" value="P:establishment of mitotic spindle orientation"/>
    <property type="evidence" value="ECO:0007669"/>
    <property type="project" value="TreeGrafter"/>
</dbReference>
<dbReference type="GO" id="GO:0032418">
    <property type="term" value="P:lysosome localization"/>
    <property type="evidence" value="ECO:0000250"/>
    <property type="project" value="UniProtKB"/>
</dbReference>
<dbReference type="GO" id="GO:0007020">
    <property type="term" value="P:microtubule nucleation"/>
    <property type="evidence" value="ECO:0007669"/>
    <property type="project" value="TreeGrafter"/>
</dbReference>
<dbReference type="GO" id="GO:0007100">
    <property type="term" value="P:mitotic centrosome separation"/>
    <property type="evidence" value="ECO:0007669"/>
    <property type="project" value="TreeGrafter"/>
</dbReference>
<dbReference type="GO" id="GO:0007399">
    <property type="term" value="P:nervous system development"/>
    <property type="evidence" value="ECO:0007669"/>
    <property type="project" value="UniProtKB-KW"/>
</dbReference>
<dbReference type="GO" id="GO:1900029">
    <property type="term" value="P:positive regulation of ruffle assembly"/>
    <property type="evidence" value="ECO:0000250"/>
    <property type="project" value="UniProtKB"/>
</dbReference>
<dbReference type="GO" id="GO:0010975">
    <property type="term" value="P:regulation of neuron projection development"/>
    <property type="evidence" value="ECO:0007669"/>
    <property type="project" value="TreeGrafter"/>
</dbReference>
<dbReference type="GO" id="GO:0047496">
    <property type="term" value="P:vesicle transport along microtubule"/>
    <property type="evidence" value="ECO:0007669"/>
    <property type="project" value="TreeGrafter"/>
</dbReference>
<dbReference type="Gene3D" id="6.10.250.1080">
    <property type="match status" value="1"/>
</dbReference>
<dbReference type="InterPro" id="IPR033494">
    <property type="entry name" value="NUDE"/>
</dbReference>
<dbReference type="InterPro" id="IPR006964">
    <property type="entry name" value="NUDE_dom"/>
</dbReference>
<dbReference type="PANTHER" id="PTHR10921">
    <property type="entry name" value="NUCLEAR DISTRIBUTION PROTEIN NUDE HOMOLOG 1"/>
    <property type="match status" value="1"/>
</dbReference>
<dbReference type="PANTHER" id="PTHR10921:SF0">
    <property type="entry name" value="NUCLEAR DISTRIBUTION PROTEIN NUDE-LIKE 1"/>
    <property type="match status" value="1"/>
</dbReference>
<dbReference type="Pfam" id="PF04880">
    <property type="entry name" value="NUDE_C"/>
    <property type="match status" value="1"/>
</dbReference>
<sequence length="345" mass="38449">MDGEDIPDFSSLKEETAYWKELSLKYKQTFQEARDELVEFQEGSRELEAELEAQLVQAEQRNRDLQADNQRLKYEVEALKEKLEHQYAQSYKQVSVLEDDLSQTRAIKEQLHKYVRELEQANDDLERAKRATIVSLEDFEQRLNQAIERNAFLESELDEKESLLVSVQRLKDEARDLRQELAVRERQQEVTRKSAPSSPTLDCEKMDSAVQASLSLPATPVGKGTENSFPSPKAIPNGFGTSPLTPSARISALNIVGDLLRKVGALESKLAACRNFAKDQASRKSYISGNVNCGVMNSNGTKFSRSGHTSFFDKGAVNGFDPAPPPPGLGSSRPLSAPGMLPLSV</sequence>
<keyword id="KW-0137">Centromere</keyword>
<keyword id="KW-0158">Chromosome</keyword>
<keyword id="KW-0175">Coiled coil</keyword>
<keyword id="KW-0963">Cytoplasm</keyword>
<keyword id="KW-0206">Cytoskeleton</keyword>
<keyword id="KW-0217">Developmental protein</keyword>
<keyword id="KW-0221">Differentiation</keyword>
<keyword id="KW-0995">Kinetochore</keyword>
<keyword id="KW-0449">Lipoprotein</keyword>
<keyword id="KW-0493">Microtubule</keyword>
<keyword id="KW-0524">Neurogenesis</keyword>
<keyword id="KW-0564">Palmitate</keyword>
<keyword id="KW-0597">Phosphoprotein</keyword>
<keyword id="KW-1185">Reference proteome</keyword>
<keyword id="KW-0813">Transport</keyword>
<name>NDEL1_RABIT</name>
<accession>O46480</accession>
<evidence type="ECO:0000250" key="1"/>
<evidence type="ECO:0000250" key="2">
    <source>
        <dbReference type="UniProtKB" id="Q78PB6"/>
    </source>
</evidence>
<evidence type="ECO:0000250" key="3">
    <source>
        <dbReference type="UniProtKB" id="Q9ERR1"/>
    </source>
</evidence>
<evidence type="ECO:0000250" key="4">
    <source>
        <dbReference type="UniProtKB" id="Q9GZM8"/>
    </source>
</evidence>
<evidence type="ECO:0000255" key="5"/>
<evidence type="ECO:0000256" key="6">
    <source>
        <dbReference type="SAM" id="MobiDB-lite"/>
    </source>
</evidence>
<evidence type="ECO:0000269" key="7">
    <source>
    </source>
</evidence>
<evidence type="ECO:0000305" key="8"/>
<evidence type="ECO:0000305" key="9">
    <source>
    </source>
</evidence>